<feature type="chain" id="PRO_1000204460" description="Cytidylate kinase">
    <location>
        <begin position="1"/>
        <end position="189"/>
    </location>
</feature>
<feature type="binding site" evidence="1">
    <location>
        <begin position="7"/>
        <end position="15"/>
    </location>
    <ligand>
        <name>ATP</name>
        <dbReference type="ChEBI" id="CHEBI:30616"/>
    </ligand>
</feature>
<organism>
    <name type="scientific">Saccharolobus islandicus (strain M.16.4 / Kamchatka #3)</name>
    <name type="common">Sulfolobus islandicus</name>
    <dbReference type="NCBI Taxonomy" id="426118"/>
    <lineage>
        <taxon>Archaea</taxon>
        <taxon>Thermoproteota</taxon>
        <taxon>Thermoprotei</taxon>
        <taxon>Sulfolobales</taxon>
        <taxon>Sulfolobaceae</taxon>
        <taxon>Saccharolobus</taxon>
    </lineage>
</organism>
<gene>
    <name evidence="1" type="primary">cmk</name>
    <name type="ordered locus">M164_1441</name>
</gene>
<comment type="catalytic activity">
    <reaction evidence="1">
        <text>CMP + ATP = CDP + ADP</text>
        <dbReference type="Rhea" id="RHEA:11600"/>
        <dbReference type="ChEBI" id="CHEBI:30616"/>
        <dbReference type="ChEBI" id="CHEBI:58069"/>
        <dbReference type="ChEBI" id="CHEBI:60377"/>
        <dbReference type="ChEBI" id="CHEBI:456216"/>
        <dbReference type="EC" id="2.7.4.25"/>
    </reaction>
</comment>
<comment type="catalytic activity">
    <reaction evidence="1">
        <text>dCMP + ATP = dCDP + ADP</text>
        <dbReference type="Rhea" id="RHEA:25094"/>
        <dbReference type="ChEBI" id="CHEBI:30616"/>
        <dbReference type="ChEBI" id="CHEBI:57566"/>
        <dbReference type="ChEBI" id="CHEBI:58593"/>
        <dbReference type="ChEBI" id="CHEBI:456216"/>
        <dbReference type="EC" id="2.7.4.25"/>
    </reaction>
</comment>
<comment type="subcellular location">
    <subcellularLocation>
        <location evidence="1">Cytoplasm</location>
    </subcellularLocation>
</comment>
<comment type="similarity">
    <text evidence="1">Belongs to the cytidylate kinase family. Type 2 subfamily.</text>
</comment>
<name>KCY_SACI6</name>
<reference key="1">
    <citation type="journal article" date="2009" name="Proc. Natl. Acad. Sci. U.S.A.">
        <title>Biogeography of the Sulfolobus islandicus pan-genome.</title>
        <authorList>
            <person name="Reno M.L."/>
            <person name="Held N.L."/>
            <person name="Fields C.J."/>
            <person name="Burke P.V."/>
            <person name="Whitaker R.J."/>
        </authorList>
    </citation>
    <scope>NUCLEOTIDE SEQUENCE [LARGE SCALE GENOMIC DNA]</scope>
    <source>
        <strain>M.16.4 / Kamchatka #3</strain>
    </source>
</reference>
<protein>
    <recommendedName>
        <fullName evidence="1">Cytidylate kinase</fullName>
        <shortName evidence="1">CK</shortName>
        <ecNumber evidence="1">2.7.4.25</ecNumber>
    </recommendedName>
    <alternativeName>
        <fullName evidence="1">Cytidine monophosphate kinase</fullName>
        <shortName evidence="1">CMP kinase</shortName>
    </alternativeName>
</protein>
<dbReference type="EC" id="2.7.4.25" evidence="1"/>
<dbReference type="EMBL" id="CP001402">
    <property type="protein sequence ID" value="ACR42047.1"/>
    <property type="molecule type" value="Genomic_DNA"/>
</dbReference>
<dbReference type="RefSeq" id="WP_012711445.1">
    <property type="nucleotide sequence ID" value="NC_012726.1"/>
</dbReference>
<dbReference type="SMR" id="C4KHI3"/>
<dbReference type="GeneID" id="84061764"/>
<dbReference type="KEGG" id="sid:M164_1441"/>
<dbReference type="HOGENOM" id="CLU_079959_1_0_2"/>
<dbReference type="Proteomes" id="UP000001479">
    <property type="component" value="Chromosome"/>
</dbReference>
<dbReference type="GO" id="GO:0005737">
    <property type="term" value="C:cytoplasm"/>
    <property type="evidence" value="ECO:0007669"/>
    <property type="project" value="UniProtKB-SubCell"/>
</dbReference>
<dbReference type="GO" id="GO:0005524">
    <property type="term" value="F:ATP binding"/>
    <property type="evidence" value="ECO:0007669"/>
    <property type="project" value="UniProtKB-UniRule"/>
</dbReference>
<dbReference type="GO" id="GO:0036430">
    <property type="term" value="F:CMP kinase activity"/>
    <property type="evidence" value="ECO:0007669"/>
    <property type="project" value="RHEA"/>
</dbReference>
<dbReference type="GO" id="GO:0036431">
    <property type="term" value="F:dCMP kinase activity"/>
    <property type="evidence" value="ECO:0007669"/>
    <property type="project" value="RHEA"/>
</dbReference>
<dbReference type="GO" id="GO:0006220">
    <property type="term" value="P:pyrimidine nucleotide metabolic process"/>
    <property type="evidence" value="ECO:0007669"/>
    <property type="project" value="UniProtKB-UniRule"/>
</dbReference>
<dbReference type="CDD" id="cd02020">
    <property type="entry name" value="CMPK"/>
    <property type="match status" value="1"/>
</dbReference>
<dbReference type="Gene3D" id="3.40.50.300">
    <property type="entry name" value="P-loop containing nucleotide triphosphate hydrolases"/>
    <property type="match status" value="1"/>
</dbReference>
<dbReference type="HAMAP" id="MF_00239">
    <property type="entry name" value="Cytidyl_kinase_type2"/>
    <property type="match status" value="1"/>
</dbReference>
<dbReference type="InterPro" id="IPR011892">
    <property type="entry name" value="Cyt_kin_arch"/>
</dbReference>
<dbReference type="InterPro" id="IPR011994">
    <property type="entry name" value="Cytidylate_kinase_dom"/>
</dbReference>
<dbReference type="InterPro" id="IPR027417">
    <property type="entry name" value="P-loop_NTPase"/>
</dbReference>
<dbReference type="NCBIfam" id="TIGR02173">
    <property type="entry name" value="cyt_kin_arch"/>
    <property type="match status" value="1"/>
</dbReference>
<dbReference type="Pfam" id="PF13189">
    <property type="entry name" value="Cytidylate_kin2"/>
    <property type="match status" value="1"/>
</dbReference>
<dbReference type="SUPFAM" id="SSF52540">
    <property type="entry name" value="P-loop containing nucleoside triphosphate hydrolases"/>
    <property type="match status" value="1"/>
</dbReference>
<evidence type="ECO:0000255" key="1">
    <source>
        <dbReference type="HAMAP-Rule" id="MF_00239"/>
    </source>
</evidence>
<keyword id="KW-0067">ATP-binding</keyword>
<keyword id="KW-0963">Cytoplasm</keyword>
<keyword id="KW-0418">Kinase</keyword>
<keyword id="KW-0547">Nucleotide-binding</keyword>
<keyword id="KW-0808">Transferase</keyword>
<proteinExistence type="inferred from homology"/>
<accession>C4KHI3</accession>
<sequence>MIIIISGPPGSGKTSVAIKLANELSYKFISAGKIFRDIAQKMGLDIINLNKVAESNFDIDKMVDKKIFEFILSEKNLIIESHIAGWLFREYTNIAIYLWAPLKIRANRIAIRDKISYDQAISQIIKREYMHYKRFNKFYGIDINDLSVFDLVINTSNVDVNNIVKLILTYLSSVSQNPQPLKEKDINDK</sequence>